<reference key="1">
    <citation type="submission" date="1998-12" db="EMBL/GenBank/DDBJ databases">
        <title>Sequence of the mouse major histocompatibility complex class II region.</title>
        <authorList>
            <person name="Rowen L."/>
            <person name="Qin S."/>
            <person name="Madan A."/>
            <person name="Loretz C."/>
            <person name="Hall J."/>
            <person name="James R."/>
            <person name="Dors M."/>
            <person name="Shaffer T."/>
            <person name="Abbasi N."/>
            <person name="Ratcliffe A."/>
            <person name="Dickhoff R."/>
            <person name="Lasky S."/>
            <person name="Hood L."/>
        </authorList>
    </citation>
    <scope>NUCLEOTIDE SEQUENCE [LARGE SCALE GENOMIC DNA]</scope>
    <source>
        <strain>129</strain>
    </source>
</reference>
<reference key="2">
    <citation type="journal article" date="2004" name="Mamm. Genome">
        <title>Gene content of the 750-kb critical region for mouse embryonic ectoderm lethal tcl-w5.</title>
        <authorList>
            <person name="Abe K."/>
            <person name="Yuzuriha M."/>
            <person name="Sugimoto M."/>
            <person name="Ko M.S."/>
            <person name="Brathwaite M.E."/>
            <person name="Waeltz P."/>
            <person name="Nagaraja R."/>
        </authorList>
    </citation>
    <scope>NUCLEOTIDE SEQUENCE [LARGE SCALE GENOMIC DNA]</scope>
    <source>
        <strain>129/Sv</strain>
    </source>
</reference>
<reference key="3">
    <citation type="journal article" date="2005" name="Science">
        <title>The transcriptional landscape of the mammalian genome.</title>
        <authorList>
            <person name="Carninci P."/>
            <person name="Kasukawa T."/>
            <person name="Katayama S."/>
            <person name="Gough J."/>
            <person name="Frith M.C."/>
            <person name="Maeda N."/>
            <person name="Oyama R."/>
            <person name="Ravasi T."/>
            <person name="Lenhard B."/>
            <person name="Wells C."/>
            <person name="Kodzius R."/>
            <person name="Shimokawa K."/>
            <person name="Bajic V.B."/>
            <person name="Brenner S.E."/>
            <person name="Batalov S."/>
            <person name="Forrest A.R."/>
            <person name="Zavolan M."/>
            <person name="Davis M.J."/>
            <person name="Wilming L.G."/>
            <person name="Aidinis V."/>
            <person name="Allen J.E."/>
            <person name="Ambesi-Impiombato A."/>
            <person name="Apweiler R."/>
            <person name="Aturaliya R.N."/>
            <person name="Bailey T.L."/>
            <person name="Bansal M."/>
            <person name="Baxter L."/>
            <person name="Beisel K.W."/>
            <person name="Bersano T."/>
            <person name="Bono H."/>
            <person name="Chalk A.M."/>
            <person name="Chiu K.P."/>
            <person name="Choudhary V."/>
            <person name="Christoffels A."/>
            <person name="Clutterbuck D.R."/>
            <person name="Crowe M.L."/>
            <person name="Dalla E."/>
            <person name="Dalrymple B.P."/>
            <person name="de Bono B."/>
            <person name="Della Gatta G."/>
            <person name="di Bernardo D."/>
            <person name="Down T."/>
            <person name="Engstrom P."/>
            <person name="Fagiolini M."/>
            <person name="Faulkner G."/>
            <person name="Fletcher C.F."/>
            <person name="Fukushima T."/>
            <person name="Furuno M."/>
            <person name="Futaki S."/>
            <person name="Gariboldi M."/>
            <person name="Georgii-Hemming P."/>
            <person name="Gingeras T.R."/>
            <person name="Gojobori T."/>
            <person name="Green R.E."/>
            <person name="Gustincich S."/>
            <person name="Harbers M."/>
            <person name="Hayashi Y."/>
            <person name="Hensch T.K."/>
            <person name="Hirokawa N."/>
            <person name="Hill D."/>
            <person name="Huminiecki L."/>
            <person name="Iacono M."/>
            <person name="Ikeo K."/>
            <person name="Iwama A."/>
            <person name="Ishikawa T."/>
            <person name="Jakt M."/>
            <person name="Kanapin A."/>
            <person name="Katoh M."/>
            <person name="Kawasawa Y."/>
            <person name="Kelso J."/>
            <person name="Kitamura H."/>
            <person name="Kitano H."/>
            <person name="Kollias G."/>
            <person name="Krishnan S.P."/>
            <person name="Kruger A."/>
            <person name="Kummerfeld S.K."/>
            <person name="Kurochkin I.V."/>
            <person name="Lareau L.F."/>
            <person name="Lazarevic D."/>
            <person name="Lipovich L."/>
            <person name="Liu J."/>
            <person name="Liuni S."/>
            <person name="McWilliam S."/>
            <person name="Madan Babu M."/>
            <person name="Madera M."/>
            <person name="Marchionni L."/>
            <person name="Matsuda H."/>
            <person name="Matsuzawa S."/>
            <person name="Miki H."/>
            <person name="Mignone F."/>
            <person name="Miyake S."/>
            <person name="Morris K."/>
            <person name="Mottagui-Tabar S."/>
            <person name="Mulder N."/>
            <person name="Nakano N."/>
            <person name="Nakauchi H."/>
            <person name="Ng P."/>
            <person name="Nilsson R."/>
            <person name="Nishiguchi S."/>
            <person name="Nishikawa S."/>
            <person name="Nori F."/>
            <person name="Ohara O."/>
            <person name="Okazaki Y."/>
            <person name="Orlando V."/>
            <person name="Pang K.C."/>
            <person name="Pavan W.J."/>
            <person name="Pavesi G."/>
            <person name="Pesole G."/>
            <person name="Petrovsky N."/>
            <person name="Piazza S."/>
            <person name="Reed J."/>
            <person name="Reid J.F."/>
            <person name="Ring B.Z."/>
            <person name="Ringwald M."/>
            <person name="Rost B."/>
            <person name="Ruan Y."/>
            <person name="Salzberg S.L."/>
            <person name="Sandelin A."/>
            <person name="Schneider C."/>
            <person name="Schoenbach C."/>
            <person name="Sekiguchi K."/>
            <person name="Semple C.A."/>
            <person name="Seno S."/>
            <person name="Sessa L."/>
            <person name="Sheng Y."/>
            <person name="Shibata Y."/>
            <person name="Shimada H."/>
            <person name="Shimada K."/>
            <person name="Silva D."/>
            <person name="Sinclair B."/>
            <person name="Sperling S."/>
            <person name="Stupka E."/>
            <person name="Sugiura K."/>
            <person name="Sultana R."/>
            <person name="Takenaka Y."/>
            <person name="Taki K."/>
            <person name="Tammoja K."/>
            <person name="Tan S.L."/>
            <person name="Tang S."/>
            <person name="Taylor M.S."/>
            <person name="Tegner J."/>
            <person name="Teichmann S.A."/>
            <person name="Ueda H.R."/>
            <person name="van Nimwegen E."/>
            <person name="Verardo R."/>
            <person name="Wei C.L."/>
            <person name="Yagi K."/>
            <person name="Yamanishi H."/>
            <person name="Zabarovsky E."/>
            <person name="Zhu S."/>
            <person name="Zimmer A."/>
            <person name="Hide W."/>
            <person name="Bult C."/>
            <person name="Grimmond S.M."/>
            <person name="Teasdale R.D."/>
            <person name="Liu E.T."/>
            <person name="Brusic V."/>
            <person name="Quackenbush J."/>
            <person name="Wahlestedt C."/>
            <person name="Mattick J.S."/>
            <person name="Hume D.A."/>
            <person name="Kai C."/>
            <person name="Sasaki D."/>
            <person name="Tomaru Y."/>
            <person name="Fukuda S."/>
            <person name="Kanamori-Katayama M."/>
            <person name="Suzuki M."/>
            <person name="Aoki J."/>
            <person name="Arakawa T."/>
            <person name="Iida J."/>
            <person name="Imamura K."/>
            <person name="Itoh M."/>
            <person name="Kato T."/>
            <person name="Kawaji H."/>
            <person name="Kawagashira N."/>
            <person name="Kawashima T."/>
            <person name="Kojima M."/>
            <person name="Kondo S."/>
            <person name="Konno H."/>
            <person name="Nakano K."/>
            <person name="Ninomiya N."/>
            <person name="Nishio T."/>
            <person name="Okada M."/>
            <person name="Plessy C."/>
            <person name="Shibata K."/>
            <person name="Shiraki T."/>
            <person name="Suzuki S."/>
            <person name="Tagami M."/>
            <person name="Waki K."/>
            <person name="Watahiki A."/>
            <person name="Okamura-Oho Y."/>
            <person name="Suzuki H."/>
            <person name="Kawai J."/>
            <person name="Hayashizaki Y."/>
        </authorList>
    </citation>
    <scope>NUCLEOTIDE SEQUENCE [LARGE SCALE MRNA]</scope>
    <source>
        <strain>C57BL/6J</strain>
        <tissue>Embryo</tissue>
        <tissue>Embryonic stem cell</tissue>
        <tissue>Kidney</tissue>
    </source>
</reference>
<reference key="4">
    <citation type="journal article" date="2004" name="Genome Res.">
        <title>The status, quality, and expansion of the NIH full-length cDNA project: the Mammalian Gene Collection (MGC).</title>
        <authorList>
            <consortium name="The MGC Project Team"/>
        </authorList>
    </citation>
    <scope>NUCLEOTIDE SEQUENCE [LARGE SCALE MRNA]</scope>
    <source>
        <strain>C57BL/6J</strain>
        <tissue>Brain</tissue>
    </source>
</reference>
<reference key="5">
    <citation type="submission" date="2007-04" db="UniProtKB">
        <authorList>
            <person name="Lubec G."/>
            <person name="Kang S.U."/>
        </authorList>
    </citation>
    <scope>PROTEIN SEQUENCE OF 13-23; 49-57 AND 62-74</scope>
    <scope>IDENTIFICATION BY MASS SPECTROMETRY</scope>
    <source>
        <strain>C57BL/6J</strain>
        <tissue>Brain</tissue>
    </source>
</reference>
<reference key="6">
    <citation type="journal article" date="2010" name="Cell">
        <title>A tissue-specific atlas of mouse protein phosphorylation and expression.</title>
        <authorList>
            <person name="Huttlin E.L."/>
            <person name="Jedrychowski M.P."/>
            <person name="Elias J.E."/>
            <person name="Goswami T."/>
            <person name="Rad R."/>
            <person name="Beausoleil S.A."/>
            <person name="Villen J."/>
            <person name="Haas W."/>
            <person name="Sowa M.E."/>
            <person name="Gygi S.P."/>
        </authorList>
    </citation>
    <scope>IDENTIFICATION BY MASS SPECTROMETRY [LARGE SCALE ANALYSIS]</scope>
    <source>
        <tissue>Brain</tissue>
        <tissue>Brown adipose tissue</tissue>
        <tissue>Heart</tissue>
        <tissue>Kidney</tissue>
        <tissue>Liver</tissue>
        <tissue>Lung</tissue>
        <tissue>Pancreas</tissue>
        <tissue>Testis</tissue>
    </source>
</reference>
<reference key="7">
    <citation type="journal article" date="2013" name="Proc. Natl. Acad. Sci. U.S.A.">
        <title>Label-free quantitative proteomics of the lysine acetylome in mitochondria identifies substrates of SIRT3 in metabolic pathways.</title>
        <authorList>
            <person name="Rardin M.J."/>
            <person name="Newman J.C."/>
            <person name="Held J.M."/>
            <person name="Cusack M.P."/>
            <person name="Sorensen D.J."/>
            <person name="Li B."/>
            <person name="Schilling B."/>
            <person name="Mooney S.D."/>
            <person name="Kahn C.R."/>
            <person name="Verdin E."/>
            <person name="Gibson B.W."/>
        </authorList>
    </citation>
    <scope>ACETYLATION [LARGE SCALE ANALYSIS] AT LYS-40</scope>
    <scope>IDENTIFICATION BY MASS SPECTROMETRY [LARGE SCALE ANALYSIS]</scope>
    <source>
        <tissue>Liver</tissue>
    </source>
</reference>
<reference evidence="6" key="8">
    <citation type="journal article" date="2024" name="Nat. Struct. Mol. Biol.">
        <title>SCAF1 drives the compositional diversity of mammalian respirasomes.</title>
        <authorList>
            <person name="Vercellino I."/>
            <person name="Sazanov L.A."/>
        </authorList>
    </citation>
    <scope>STRUCTURE BY ELECTRON MICROSCOPY (3.60 ANGSTROMS) IN COMPLEX WITH MITOCHONDRIAL RESPIRATORY SUPERCOMPLEX</scope>
    <scope>FUNCTION</scope>
    <scope>SUBCELLULAR LOCATION</scope>
    <scope>SUBUNIT</scope>
</reference>
<name>NDUA7_MOUSE</name>
<organism>
    <name type="scientific">Mus musculus</name>
    <name type="common">Mouse</name>
    <dbReference type="NCBI Taxonomy" id="10090"/>
    <lineage>
        <taxon>Eukaryota</taxon>
        <taxon>Metazoa</taxon>
        <taxon>Chordata</taxon>
        <taxon>Craniata</taxon>
        <taxon>Vertebrata</taxon>
        <taxon>Euteleostomi</taxon>
        <taxon>Mammalia</taxon>
        <taxon>Eutheria</taxon>
        <taxon>Euarchontoglires</taxon>
        <taxon>Glires</taxon>
        <taxon>Rodentia</taxon>
        <taxon>Myomorpha</taxon>
        <taxon>Muroidea</taxon>
        <taxon>Muridae</taxon>
        <taxon>Murinae</taxon>
        <taxon>Mus</taxon>
        <taxon>Mus</taxon>
    </lineage>
</organism>
<keyword id="KW-0002">3D-structure</keyword>
<keyword id="KW-0007">Acetylation</keyword>
<keyword id="KW-0903">Direct protein sequencing</keyword>
<keyword id="KW-0249">Electron transport</keyword>
<keyword id="KW-0472">Membrane</keyword>
<keyword id="KW-0496">Mitochondrion</keyword>
<keyword id="KW-0999">Mitochondrion inner membrane</keyword>
<keyword id="KW-0597">Phosphoprotein</keyword>
<keyword id="KW-1185">Reference proteome</keyword>
<keyword id="KW-0679">Respiratory chain</keyword>
<keyword id="KW-0813">Transport</keyword>
<dbReference type="EMBL" id="AF110520">
    <property type="protein sequence ID" value="AAC97968.1"/>
    <property type="molecule type" value="Genomic_DNA"/>
</dbReference>
<dbReference type="EMBL" id="AF528162">
    <property type="protein sequence ID" value="AAO17379.1"/>
    <property type="molecule type" value="Genomic_DNA"/>
</dbReference>
<dbReference type="EMBL" id="AK002476">
    <property type="protein sequence ID" value="BAB22129.1"/>
    <property type="molecule type" value="mRNA"/>
</dbReference>
<dbReference type="EMBL" id="AK003468">
    <property type="protein sequence ID" value="BAB22805.1"/>
    <property type="molecule type" value="mRNA"/>
</dbReference>
<dbReference type="EMBL" id="AK010299">
    <property type="protein sequence ID" value="BAB26832.1"/>
    <property type="molecule type" value="mRNA"/>
</dbReference>
<dbReference type="EMBL" id="BC052817">
    <property type="protein sequence ID" value="AAH52817.1"/>
    <property type="molecule type" value="mRNA"/>
</dbReference>
<dbReference type="EMBL" id="BC055698">
    <property type="protein sequence ID" value="AAH55698.1"/>
    <property type="molecule type" value="mRNA"/>
</dbReference>
<dbReference type="CCDS" id="CCDS28631.1"/>
<dbReference type="RefSeq" id="NP_075691.1">
    <property type="nucleotide sequence ID" value="NM_023202.4"/>
</dbReference>
<dbReference type="PDB" id="6G2J">
    <property type="method" value="EM"/>
    <property type="resolution" value="3.30 A"/>
    <property type="chains" value="r=1-113"/>
</dbReference>
<dbReference type="PDB" id="6G72">
    <property type="method" value="EM"/>
    <property type="resolution" value="3.90 A"/>
    <property type="chains" value="r=1-113"/>
</dbReference>
<dbReference type="PDB" id="6ZR2">
    <property type="method" value="EM"/>
    <property type="resolution" value="3.10 A"/>
    <property type="chains" value="r=1-113"/>
</dbReference>
<dbReference type="PDB" id="6ZTQ">
    <property type="method" value="EM"/>
    <property type="resolution" value="3.00 A"/>
    <property type="chains" value="r=1-113"/>
</dbReference>
<dbReference type="PDB" id="7AK5">
    <property type="method" value="EM"/>
    <property type="resolution" value="3.17 A"/>
    <property type="chains" value="r=2-113"/>
</dbReference>
<dbReference type="PDB" id="7AK6">
    <property type="method" value="EM"/>
    <property type="resolution" value="3.82 A"/>
    <property type="chains" value="r=2-113"/>
</dbReference>
<dbReference type="PDB" id="7B93">
    <property type="method" value="EM"/>
    <property type="resolution" value="3.04 A"/>
    <property type="chains" value="r=1-113"/>
</dbReference>
<dbReference type="PDB" id="7PSA">
    <property type="method" value="EM"/>
    <property type="resolution" value="3.40 A"/>
    <property type="chains" value="r=1-113"/>
</dbReference>
<dbReference type="PDB" id="8C2S">
    <property type="method" value="EM"/>
    <property type="resolution" value="3.90 A"/>
    <property type="chains" value="r=1-113"/>
</dbReference>
<dbReference type="PDB" id="8CA3">
    <property type="method" value="EM"/>
    <property type="resolution" value="3.20 A"/>
    <property type="chains" value="r=1-113"/>
</dbReference>
<dbReference type="PDB" id="8CA5">
    <property type="method" value="EM"/>
    <property type="resolution" value="3.90 A"/>
    <property type="chains" value="r=1-113"/>
</dbReference>
<dbReference type="PDB" id="8IAO">
    <property type="method" value="EM"/>
    <property type="resolution" value="4.20 A"/>
    <property type="chains" value="r=1-113"/>
</dbReference>
<dbReference type="PDB" id="8IAP">
    <property type="method" value="EM"/>
    <property type="resolution" value="3.20 A"/>
    <property type="chains" value="r=1-113"/>
</dbReference>
<dbReference type="PDB" id="8IB4">
    <property type="method" value="EM"/>
    <property type="resolution" value="4.30 A"/>
    <property type="chains" value="r=1-113"/>
</dbReference>
<dbReference type="PDB" id="8IB5">
    <property type="method" value="EM"/>
    <property type="resolution" value="3.30 A"/>
    <property type="chains" value="r=1-113"/>
</dbReference>
<dbReference type="PDB" id="8IB9">
    <property type="method" value="EM"/>
    <property type="resolution" value="4.30 A"/>
    <property type="chains" value="r=1-113"/>
</dbReference>
<dbReference type="PDB" id="8IBA">
    <property type="method" value="EM"/>
    <property type="resolution" value="3.20 A"/>
    <property type="chains" value="r=1-113"/>
</dbReference>
<dbReference type="PDB" id="8IBD">
    <property type="method" value="EM"/>
    <property type="resolution" value="4.20 A"/>
    <property type="chains" value="r=1-113"/>
</dbReference>
<dbReference type="PDB" id="8IBE">
    <property type="method" value="EM"/>
    <property type="resolution" value="3.30 A"/>
    <property type="chains" value="r=1-113"/>
</dbReference>
<dbReference type="PDB" id="8IC2">
    <property type="method" value="EM"/>
    <property type="resolution" value="6.30 A"/>
    <property type="chains" value="r=1-113"/>
</dbReference>
<dbReference type="PDB" id="8IC3">
    <property type="method" value="EM"/>
    <property type="resolution" value="3.20 A"/>
    <property type="chains" value="r=1-113"/>
</dbReference>
<dbReference type="PDB" id="8OLT">
    <property type="method" value="EM"/>
    <property type="resolution" value="2.84 A"/>
    <property type="chains" value="r=1-113"/>
</dbReference>
<dbReference type="PDB" id="8OM1">
    <property type="method" value="EM"/>
    <property type="resolution" value="2.39 A"/>
    <property type="chains" value="r=2-113"/>
</dbReference>
<dbReference type="PDB" id="8PW5">
    <property type="method" value="EM"/>
    <property type="resolution" value="3.60 A"/>
    <property type="chains" value="r1=1-113"/>
</dbReference>
<dbReference type="PDB" id="8PW6">
    <property type="method" value="EM"/>
    <property type="resolution" value="3.30 A"/>
    <property type="chains" value="r1=1-113"/>
</dbReference>
<dbReference type="PDB" id="8PW7">
    <property type="method" value="EM"/>
    <property type="resolution" value="3.50 A"/>
    <property type="chains" value="r1=1-113"/>
</dbReference>
<dbReference type="PDB" id="8RGP">
    <property type="method" value="EM"/>
    <property type="resolution" value="3.00 A"/>
    <property type="chains" value="r=1-113"/>
</dbReference>
<dbReference type="PDB" id="8RGQ">
    <property type="method" value="EM"/>
    <property type="resolution" value="3.00 A"/>
    <property type="chains" value="r=1-113"/>
</dbReference>
<dbReference type="PDB" id="8RGR">
    <property type="method" value="EM"/>
    <property type="resolution" value="2.90 A"/>
    <property type="chains" value="r=1-113"/>
</dbReference>
<dbReference type="PDB" id="8RGT">
    <property type="method" value="EM"/>
    <property type="resolution" value="3.10 A"/>
    <property type="chains" value="r=1-113"/>
</dbReference>
<dbReference type="PDB" id="8UCA">
    <property type="method" value="EM"/>
    <property type="resolution" value="3.70 A"/>
    <property type="chains" value="A7/a7=2-113"/>
</dbReference>
<dbReference type="PDB" id="8XNL">
    <property type="method" value="EM"/>
    <property type="resolution" value="3.10 A"/>
    <property type="chains" value="r=1-113"/>
</dbReference>
<dbReference type="PDB" id="8XNM">
    <property type="method" value="EM"/>
    <property type="resolution" value="3.50 A"/>
    <property type="chains" value="r=1-113"/>
</dbReference>
<dbReference type="PDB" id="8XNN">
    <property type="method" value="EM"/>
    <property type="resolution" value="3.60 A"/>
    <property type="chains" value="r=1-113"/>
</dbReference>
<dbReference type="PDB" id="8XNO">
    <property type="method" value="EM"/>
    <property type="resolution" value="3.40 A"/>
    <property type="chains" value="r=1-113"/>
</dbReference>
<dbReference type="PDB" id="8XNP">
    <property type="method" value="EM"/>
    <property type="resolution" value="3.50 A"/>
    <property type="chains" value="r=1-113"/>
</dbReference>
<dbReference type="PDB" id="8XNQ">
    <property type="method" value="EM"/>
    <property type="resolution" value="3.70 A"/>
    <property type="chains" value="r=1-113"/>
</dbReference>
<dbReference type="PDB" id="8XNR">
    <property type="method" value="EM"/>
    <property type="resolution" value="3.30 A"/>
    <property type="chains" value="r=1-113"/>
</dbReference>
<dbReference type="PDB" id="8XNS">
    <property type="method" value="EM"/>
    <property type="resolution" value="3.50 A"/>
    <property type="chains" value="r=1-113"/>
</dbReference>
<dbReference type="PDB" id="8XNT">
    <property type="method" value="EM"/>
    <property type="resolution" value="4.10 A"/>
    <property type="chains" value="r=1-113"/>
</dbReference>
<dbReference type="PDB" id="8XNU">
    <property type="method" value="EM"/>
    <property type="resolution" value="3.60 A"/>
    <property type="chains" value="r=1-113"/>
</dbReference>
<dbReference type="PDB" id="8XNV">
    <property type="method" value="EM"/>
    <property type="resolution" value="3.30 A"/>
    <property type="chains" value="r=1-113"/>
</dbReference>
<dbReference type="PDB" id="8XNW">
    <property type="method" value="EM"/>
    <property type="resolution" value="3.60 A"/>
    <property type="chains" value="r=1-113"/>
</dbReference>
<dbReference type="PDB" id="8XNX">
    <property type="method" value="EM"/>
    <property type="resolution" value="3.50 A"/>
    <property type="chains" value="r=1-113"/>
</dbReference>
<dbReference type="PDB" id="8XNY">
    <property type="method" value="EM"/>
    <property type="resolution" value="4.10 A"/>
    <property type="chains" value="r=1-113"/>
</dbReference>
<dbReference type="PDB" id="8XNZ">
    <property type="method" value="EM"/>
    <property type="resolution" value="3.30 A"/>
    <property type="chains" value="r=1-113"/>
</dbReference>
<dbReference type="PDB" id="8XO0">
    <property type="method" value="EM"/>
    <property type="resolution" value="4.20 A"/>
    <property type="chains" value="r=1-113"/>
</dbReference>
<dbReference type="PDBsum" id="6G2J"/>
<dbReference type="PDBsum" id="6G72"/>
<dbReference type="PDBsum" id="6ZR2"/>
<dbReference type="PDBsum" id="6ZTQ"/>
<dbReference type="PDBsum" id="7AK5"/>
<dbReference type="PDBsum" id="7AK6"/>
<dbReference type="PDBsum" id="7B93"/>
<dbReference type="PDBsum" id="7PSA"/>
<dbReference type="PDBsum" id="8C2S"/>
<dbReference type="PDBsum" id="8CA3"/>
<dbReference type="PDBsum" id="8CA5"/>
<dbReference type="PDBsum" id="8IAO"/>
<dbReference type="PDBsum" id="8IAP"/>
<dbReference type="PDBsum" id="8IB4"/>
<dbReference type="PDBsum" id="8IB5"/>
<dbReference type="PDBsum" id="8IB9"/>
<dbReference type="PDBsum" id="8IBA"/>
<dbReference type="PDBsum" id="8IBD"/>
<dbReference type="PDBsum" id="8IBE"/>
<dbReference type="PDBsum" id="8IC2"/>
<dbReference type="PDBsum" id="8IC3"/>
<dbReference type="PDBsum" id="8OLT"/>
<dbReference type="PDBsum" id="8OM1"/>
<dbReference type="PDBsum" id="8PW5"/>
<dbReference type="PDBsum" id="8PW6"/>
<dbReference type="PDBsum" id="8PW7"/>
<dbReference type="PDBsum" id="8RGP"/>
<dbReference type="PDBsum" id="8RGQ"/>
<dbReference type="PDBsum" id="8RGR"/>
<dbReference type="PDBsum" id="8RGT"/>
<dbReference type="PDBsum" id="8UCA"/>
<dbReference type="PDBsum" id="8XNL"/>
<dbReference type="PDBsum" id="8XNM"/>
<dbReference type="PDBsum" id="8XNN"/>
<dbReference type="PDBsum" id="8XNO"/>
<dbReference type="PDBsum" id="8XNP"/>
<dbReference type="PDBsum" id="8XNQ"/>
<dbReference type="PDBsum" id="8XNR"/>
<dbReference type="PDBsum" id="8XNS"/>
<dbReference type="PDBsum" id="8XNT"/>
<dbReference type="PDBsum" id="8XNU"/>
<dbReference type="PDBsum" id="8XNV"/>
<dbReference type="PDBsum" id="8XNW"/>
<dbReference type="PDBsum" id="8XNX"/>
<dbReference type="PDBsum" id="8XNY"/>
<dbReference type="PDBsum" id="8XNZ"/>
<dbReference type="PDBsum" id="8XO0"/>
<dbReference type="EMDB" id="EMD-11377"/>
<dbReference type="EMDB" id="EMD-11424"/>
<dbReference type="EMDB" id="EMD-11810"/>
<dbReference type="EMDB" id="EMD-11811"/>
<dbReference type="EMDB" id="EMD-12095"/>
<dbReference type="EMDB" id="EMD-13611"/>
<dbReference type="EMDB" id="EMD-16398"/>
<dbReference type="EMDB" id="EMD-16516"/>
<dbReference type="EMDB" id="EMD-16518"/>
<dbReference type="EMDB" id="EMD-16962"/>
<dbReference type="EMDB" id="EMD-16965"/>
<dbReference type="EMDB" id="EMD-17989"/>
<dbReference type="EMDB" id="EMD-17990"/>
<dbReference type="EMDB" id="EMD-17991"/>
<dbReference type="EMDB" id="EMD-19145"/>
<dbReference type="EMDB" id="EMD-19146"/>
<dbReference type="EMDB" id="EMD-19147"/>
<dbReference type="EMDB" id="EMD-19148"/>
<dbReference type="EMDB" id="EMD-35313"/>
<dbReference type="EMDB" id="EMD-35314"/>
<dbReference type="EMDB" id="EMD-35331"/>
<dbReference type="EMDB" id="EMD-35332"/>
<dbReference type="EMDB" id="EMD-35336"/>
<dbReference type="EMDB" id="EMD-35337"/>
<dbReference type="EMDB" id="EMD-35340"/>
<dbReference type="EMDB" id="EMD-35341"/>
<dbReference type="EMDB" id="EMD-35352"/>
<dbReference type="EMDB" id="EMD-35353"/>
<dbReference type="EMDB" id="EMD-38506"/>
<dbReference type="EMDB" id="EMD-38507"/>
<dbReference type="EMDB" id="EMD-38508"/>
<dbReference type="EMDB" id="EMD-38509"/>
<dbReference type="EMDB" id="EMD-38510"/>
<dbReference type="EMDB" id="EMD-38511"/>
<dbReference type="EMDB" id="EMD-38512"/>
<dbReference type="EMDB" id="EMD-38513"/>
<dbReference type="EMDB" id="EMD-38514"/>
<dbReference type="EMDB" id="EMD-38515"/>
<dbReference type="EMDB" id="EMD-38516"/>
<dbReference type="EMDB" id="EMD-38517"/>
<dbReference type="EMDB" id="EMD-38518"/>
<dbReference type="EMDB" id="EMD-38519"/>
<dbReference type="EMDB" id="EMD-38520"/>
<dbReference type="EMDB" id="EMD-38521"/>
<dbReference type="EMDB" id="EMD-42122"/>
<dbReference type="EMDB" id="EMD-4345"/>
<dbReference type="EMDB" id="EMD-4356"/>
<dbReference type="SMR" id="Q9Z1P6"/>
<dbReference type="BioGRID" id="211459">
    <property type="interactions" value="63"/>
</dbReference>
<dbReference type="ComplexPortal" id="CPX-266">
    <property type="entry name" value="Mitochondrial respiratory chain complex I"/>
</dbReference>
<dbReference type="CORUM" id="Q9Z1P6"/>
<dbReference type="FunCoup" id="Q9Z1P6">
    <property type="interactions" value="1050"/>
</dbReference>
<dbReference type="IntAct" id="Q9Z1P6">
    <property type="interactions" value="2"/>
</dbReference>
<dbReference type="STRING" id="10090.ENSMUSP00000039692"/>
<dbReference type="GlyGen" id="Q9Z1P6">
    <property type="glycosylation" value="2 sites, 1 O-linked glycan (1 site)"/>
</dbReference>
<dbReference type="iPTMnet" id="Q9Z1P6"/>
<dbReference type="PhosphoSitePlus" id="Q9Z1P6"/>
<dbReference type="SwissPalm" id="Q9Z1P6"/>
<dbReference type="jPOST" id="Q9Z1P6"/>
<dbReference type="PaxDb" id="10090-ENSMUSP00000039692"/>
<dbReference type="PeptideAtlas" id="Q9Z1P6"/>
<dbReference type="ProteomicsDB" id="293640"/>
<dbReference type="Pumba" id="Q9Z1P6"/>
<dbReference type="DNASU" id="66416"/>
<dbReference type="Ensembl" id="ENSMUST00000048249.8">
    <property type="protein sequence ID" value="ENSMUSP00000039692.7"/>
    <property type="gene ID" value="ENSMUSG00000041881.14"/>
</dbReference>
<dbReference type="GeneID" id="66416"/>
<dbReference type="KEGG" id="mmu:66416"/>
<dbReference type="UCSC" id="uc008bzu.2">
    <property type="organism name" value="mouse"/>
</dbReference>
<dbReference type="AGR" id="MGI:1913666"/>
<dbReference type="CTD" id="4701"/>
<dbReference type="MGI" id="MGI:1913666">
    <property type="gene designation" value="Ndufa7"/>
</dbReference>
<dbReference type="VEuPathDB" id="HostDB:ENSMUSG00000041881"/>
<dbReference type="eggNOG" id="KOG4630">
    <property type="taxonomic scope" value="Eukaryota"/>
</dbReference>
<dbReference type="GeneTree" id="ENSGT00390000006553"/>
<dbReference type="HOGENOM" id="CLU_149566_0_0_1"/>
<dbReference type="InParanoid" id="Q9Z1P6"/>
<dbReference type="OMA" id="ANYYFTR"/>
<dbReference type="OrthoDB" id="10063829at2759"/>
<dbReference type="PhylomeDB" id="Q9Z1P6"/>
<dbReference type="TreeFam" id="TF319126"/>
<dbReference type="Reactome" id="R-MMU-611105">
    <property type="pathway name" value="Respiratory electron transport"/>
</dbReference>
<dbReference type="Reactome" id="R-MMU-6799198">
    <property type="pathway name" value="Complex I biogenesis"/>
</dbReference>
<dbReference type="BioGRID-ORCS" id="66416">
    <property type="hits" value="2 hits in 77 CRISPR screens"/>
</dbReference>
<dbReference type="CD-CODE" id="CE726F99">
    <property type="entry name" value="Postsynaptic density"/>
</dbReference>
<dbReference type="ChiTaRS" id="Ndufa7">
    <property type="organism name" value="mouse"/>
</dbReference>
<dbReference type="PRO" id="PR:Q9Z1P6"/>
<dbReference type="Proteomes" id="UP000000589">
    <property type="component" value="Chromosome 17"/>
</dbReference>
<dbReference type="RNAct" id="Q9Z1P6">
    <property type="molecule type" value="protein"/>
</dbReference>
<dbReference type="Bgee" id="ENSMUSG00000041881">
    <property type="expression patterns" value="Expressed in choroid plexus of fourth ventricle and 262 other cell types or tissues"/>
</dbReference>
<dbReference type="ExpressionAtlas" id="Q9Z1P6">
    <property type="expression patterns" value="baseline and differential"/>
</dbReference>
<dbReference type="GO" id="GO:0005743">
    <property type="term" value="C:mitochondrial inner membrane"/>
    <property type="evidence" value="ECO:0000314"/>
    <property type="project" value="UniProtKB"/>
</dbReference>
<dbReference type="GO" id="GO:0005739">
    <property type="term" value="C:mitochondrion"/>
    <property type="evidence" value="ECO:0007005"/>
    <property type="project" value="MGI"/>
</dbReference>
<dbReference type="GO" id="GO:0045271">
    <property type="term" value="C:respiratory chain complex I"/>
    <property type="evidence" value="ECO:0000314"/>
    <property type="project" value="UniProtKB"/>
</dbReference>
<dbReference type="GO" id="GO:0009060">
    <property type="term" value="P:aerobic respiration"/>
    <property type="evidence" value="ECO:0000303"/>
    <property type="project" value="ComplexPortal"/>
</dbReference>
<dbReference type="GO" id="GO:0042773">
    <property type="term" value="P:ATP synthesis coupled electron transport"/>
    <property type="evidence" value="ECO:0007669"/>
    <property type="project" value="InterPro"/>
</dbReference>
<dbReference type="GO" id="GO:0042776">
    <property type="term" value="P:proton motive force-driven mitochondrial ATP synthesis"/>
    <property type="evidence" value="ECO:0000303"/>
    <property type="project" value="ComplexPortal"/>
</dbReference>
<dbReference type="InterPro" id="IPR009947">
    <property type="entry name" value="NDUA7"/>
</dbReference>
<dbReference type="PANTHER" id="PTHR12485:SF1">
    <property type="entry name" value="NADH DEHYDROGENASE [UBIQUINONE] 1 ALPHA SUBCOMPLEX SUBUNIT 7"/>
    <property type="match status" value="1"/>
</dbReference>
<dbReference type="PANTHER" id="PTHR12485">
    <property type="entry name" value="NADH-UBIQUINONE OXIDOREDUCTASE SUBUNIT B"/>
    <property type="match status" value="1"/>
</dbReference>
<dbReference type="Pfam" id="PF07347">
    <property type="entry name" value="CI-B14_5a"/>
    <property type="match status" value="1"/>
</dbReference>
<accession>Q9Z1P6</accession>
<sequence length="113" mass="12576">MASATRVIQKLRNWASGQDLQAKLQLRYQEIAKRTQPPPKLPVGPSHKLSNNYYCTRDGRREVVPPSIIMSSQKALVSGKAAESSAMAATEKKAVTPAPPMKRWELSKDQPYL</sequence>
<gene>
    <name type="primary">Ndufa7</name>
</gene>
<protein>
    <recommendedName>
        <fullName>NADH dehydrogenase [ubiquinone] 1 alpha subcomplex subunit 7</fullName>
    </recommendedName>
    <alternativeName>
        <fullName>Complex I-B14.5a</fullName>
        <shortName>CI-B14.5a</shortName>
    </alternativeName>
    <alternativeName>
        <fullName>NADH-ubiquinone oxidoreductase subunit B14.5a</fullName>
    </alternativeName>
</protein>
<feature type="initiator methionine" description="Removed" evidence="2">
    <location>
        <position position="1"/>
    </location>
</feature>
<feature type="chain" id="PRO_0000118835" description="NADH dehydrogenase [ubiquinone] 1 alpha subcomplex subunit 7">
    <location>
        <begin position="2"/>
        <end position="113"/>
    </location>
</feature>
<feature type="region of interest" description="Disordered" evidence="3">
    <location>
        <begin position="80"/>
        <end position="113"/>
    </location>
</feature>
<feature type="compositionally biased region" description="Basic and acidic residues" evidence="3">
    <location>
        <begin position="102"/>
        <end position="113"/>
    </location>
</feature>
<feature type="modified residue" description="N-acetylalanine" evidence="2">
    <location>
        <position position="2"/>
    </location>
</feature>
<feature type="modified residue" description="N6-acetyllysine" evidence="7">
    <location>
        <position position="40"/>
    </location>
</feature>
<feature type="modified residue" description="Phosphothreonine" evidence="1">
    <location>
        <position position="96"/>
    </location>
</feature>
<feature type="helix" evidence="8">
    <location>
        <begin position="6"/>
        <end position="16"/>
    </location>
</feature>
<feature type="helix" evidence="8">
    <location>
        <begin position="20"/>
        <end position="22"/>
    </location>
</feature>
<feature type="strand" evidence="9">
    <location>
        <begin position="28"/>
        <end position="31"/>
    </location>
</feature>
<feature type="strand" evidence="8">
    <location>
        <begin position="49"/>
        <end position="51"/>
    </location>
</feature>
<feature type="helix" evidence="8">
    <location>
        <begin position="54"/>
        <end position="56"/>
    </location>
</feature>
<feature type="helix" evidence="8">
    <location>
        <begin position="60"/>
        <end position="62"/>
    </location>
</feature>
<feature type="strand" evidence="8">
    <location>
        <begin position="67"/>
        <end position="71"/>
    </location>
</feature>
<feature type="turn" evidence="8">
    <location>
        <begin position="72"/>
        <end position="74"/>
    </location>
</feature>
<feature type="strand" evidence="9">
    <location>
        <begin position="97"/>
        <end position="99"/>
    </location>
</feature>
<proteinExistence type="evidence at protein level"/>
<comment type="function">
    <text evidence="4">Accessory subunit of the mitochondrial membrane respiratory chain NADH dehydrogenase (Complex I), that is believed not to be involved in catalysis. Complex I functions in the transfer of electrons from NADH to the respiratory chain. The immediate electron acceptor for the enzyme is believed to be ubiquinone.</text>
</comment>
<comment type="subunit">
    <text evidence="4">Complex I is composed of 45 different subunits.</text>
</comment>
<comment type="subcellular location">
    <subcellularLocation>
        <location evidence="4">Mitochondrion inner membrane</location>
        <topology evidence="4">Peripheral membrane protein</topology>
        <orientation evidence="4">Matrix side</orientation>
    </subcellularLocation>
</comment>
<comment type="similarity">
    <text evidence="5">Belongs to the complex I NDUFA7 subunit family.</text>
</comment>
<evidence type="ECO:0000250" key="1">
    <source>
        <dbReference type="UniProtKB" id="O95182"/>
    </source>
</evidence>
<evidence type="ECO:0000250" key="2">
    <source>
        <dbReference type="UniProtKB" id="Q05752"/>
    </source>
</evidence>
<evidence type="ECO:0000256" key="3">
    <source>
        <dbReference type="SAM" id="MobiDB-lite"/>
    </source>
</evidence>
<evidence type="ECO:0000269" key="4">
    <source>
    </source>
</evidence>
<evidence type="ECO:0000305" key="5"/>
<evidence type="ECO:0007744" key="6">
    <source>
        <dbReference type="PDB" id="8PW5"/>
    </source>
</evidence>
<evidence type="ECO:0007744" key="7">
    <source>
    </source>
</evidence>
<evidence type="ECO:0007829" key="8">
    <source>
        <dbReference type="PDB" id="8OM1"/>
    </source>
</evidence>
<evidence type="ECO:0007829" key="9">
    <source>
        <dbReference type="PDB" id="8RGR"/>
    </source>
</evidence>